<gene>
    <name type="primary">MT-CO2</name>
    <name type="synonym">COII</name>
    <name type="synonym">COX2</name>
    <name type="synonym">COXII</name>
    <name type="synonym">MTCO2</name>
</gene>
<protein>
    <recommendedName>
        <fullName>Cytochrome c oxidase subunit 2</fullName>
        <ecNumber>7.1.1.9</ecNumber>
    </recommendedName>
    <alternativeName>
        <fullName>Cytochrome c oxidase polypeptide II</fullName>
    </alternativeName>
</protein>
<name>COX2_CEPBA</name>
<geneLocation type="mitochondrion"/>
<evidence type="ECO:0000250" key="1">
    <source>
        <dbReference type="UniProtKB" id="P00403"/>
    </source>
</evidence>
<evidence type="ECO:0000250" key="2">
    <source>
        <dbReference type="UniProtKB" id="P00410"/>
    </source>
</evidence>
<evidence type="ECO:0000250" key="3">
    <source>
        <dbReference type="UniProtKB" id="P68530"/>
    </source>
</evidence>
<evidence type="ECO:0000305" key="4"/>
<feature type="chain" id="PRO_0000183700" description="Cytochrome c oxidase subunit 2">
    <location>
        <begin position="1"/>
        <end position="227"/>
    </location>
</feature>
<feature type="topological domain" description="Mitochondrial intermembrane" evidence="3">
    <location>
        <begin position="1"/>
        <end position="14"/>
    </location>
</feature>
<feature type="transmembrane region" description="Helical; Name=I" evidence="3">
    <location>
        <begin position="15"/>
        <end position="45"/>
    </location>
</feature>
<feature type="topological domain" description="Mitochondrial matrix" evidence="3">
    <location>
        <begin position="46"/>
        <end position="59"/>
    </location>
</feature>
<feature type="transmembrane region" description="Helical; Name=II" evidence="3">
    <location>
        <begin position="60"/>
        <end position="87"/>
    </location>
</feature>
<feature type="topological domain" description="Mitochondrial intermembrane" evidence="3">
    <location>
        <begin position="88"/>
        <end position="227"/>
    </location>
</feature>
<feature type="binding site" evidence="3">
    <location>
        <position position="161"/>
    </location>
    <ligand>
        <name>Cu cation</name>
        <dbReference type="ChEBI" id="CHEBI:23378"/>
        <label>A1</label>
    </ligand>
</feature>
<feature type="binding site" evidence="3">
    <location>
        <position position="196"/>
    </location>
    <ligand>
        <name>Cu cation</name>
        <dbReference type="ChEBI" id="CHEBI:23378"/>
        <label>A1</label>
    </ligand>
</feature>
<feature type="binding site" evidence="3">
    <location>
        <position position="196"/>
    </location>
    <ligand>
        <name>Cu cation</name>
        <dbReference type="ChEBI" id="CHEBI:23378"/>
        <label>A2</label>
    </ligand>
</feature>
<feature type="binding site" evidence="3">
    <location>
        <position position="198"/>
    </location>
    <ligand>
        <name>Cu cation</name>
        <dbReference type="ChEBI" id="CHEBI:23378"/>
        <label>A2</label>
    </ligand>
</feature>
<feature type="binding site" evidence="3">
    <location>
        <position position="198"/>
    </location>
    <ligand>
        <name>Mg(2+)</name>
        <dbReference type="ChEBI" id="CHEBI:18420"/>
        <note>ligand shared with MT-CO1</note>
    </ligand>
</feature>
<feature type="binding site" evidence="3">
    <location>
        <position position="200"/>
    </location>
    <ligand>
        <name>Cu cation</name>
        <dbReference type="ChEBI" id="CHEBI:23378"/>
        <label>A1</label>
    </ligand>
</feature>
<feature type="binding site" evidence="3">
    <location>
        <position position="200"/>
    </location>
    <ligand>
        <name>Cu cation</name>
        <dbReference type="ChEBI" id="CHEBI:23378"/>
        <label>A2</label>
    </ligand>
</feature>
<feature type="binding site" evidence="3">
    <location>
        <position position="204"/>
    </location>
    <ligand>
        <name>Cu cation</name>
        <dbReference type="ChEBI" id="CHEBI:23378"/>
        <label>A2</label>
    </ligand>
</feature>
<feature type="binding site" evidence="3">
    <location>
        <position position="207"/>
    </location>
    <ligand>
        <name>Cu cation</name>
        <dbReference type="ChEBI" id="CHEBI:23378"/>
        <label>A1</label>
    </ligand>
</feature>
<comment type="function">
    <text evidence="2">Component of the cytochrome c oxidase, the last enzyme in the mitochondrial electron transport chain which drives oxidative phosphorylation. The respiratory chain contains 3 multisubunit complexes succinate dehydrogenase (complex II, CII), ubiquinol-cytochrome c oxidoreductase (cytochrome b-c1 complex, complex III, CIII) and cytochrome c oxidase (complex IV, CIV), that cooperate to transfer electrons derived from NADH and succinate to molecular oxygen, creating an electrochemical gradient over the inner membrane that drives transmembrane transport and the ATP synthase. Cytochrome c oxidase is the component of the respiratory chain that catalyzes the reduction of oxygen to water. Electrons originating from reduced cytochrome c in the intermembrane space (IMS) are transferred via the dinuclear copper A center (CU(A)) of subunit 2 and heme A of subunit 1 to the active site in subunit 1, a binuclear center (BNC) formed by heme A3 and copper B (CU(B)). The BNC reduces molecular oxygen to 2 water molecules using 4 electrons from cytochrome c in the IMS and 4 protons from the mitochondrial matrix.</text>
</comment>
<comment type="catalytic activity">
    <reaction evidence="2">
        <text>4 Fe(II)-[cytochrome c] + O2 + 8 H(+)(in) = 4 Fe(III)-[cytochrome c] + 2 H2O + 4 H(+)(out)</text>
        <dbReference type="Rhea" id="RHEA:11436"/>
        <dbReference type="Rhea" id="RHEA-COMP:10350"/>
        <dbReference type="Rhea" id="RHEA-COMP:14399"/>
        <dbReference type="ChEBI" id="CHEBI:15377"/>
        <dbReference type="ChEBI" id="CHEBI:15378"/>
        <dbReference type="ChEBI" id="CHEBI:15379"/>
        <dbReference type="ChEBI" id="CHEBI:29033"/>
        <dbReference type="ChEBI" id="CHEBI:29034"/>
        <dbReference type="EC" id="7.1.1.9"/>
    </reaction>
    <physiologicalReaction direction="left-to-right" evidence="2">
        <dbReference type="Rhea" id="RHEA:11437"/>
    </physiologicalReaction>
</comment>
<comment type="cofactor">
    <cofactor evidence="3">
        <name>Cu cation</name>
        <dbReference type="ChEBI" id="CHEBI:23378"/>
    </cofactor>
    <text evidence="3">Binds a dinuclear copper A center per subunit.</text>
</comment>
<comment type="subunit">
    <text evidence="1 3">Component of the cytochrome c oxidase (complex IV, CIV), a multisubunit enzyme composed of 14 subunits. The complex is composed of a catalytic core of 3 subunits MT-CO1, MT-CO2 and MT-CO3, encoded in the mitochondrial DNA, and 11 supernumerary subunits COX4I, COX5A, COX5B, COX6A, COX6B, COX6C, COX7A, COX7B, COX7C, COX8 and NDUFA4, which are encoded in the nuclear genome. The complex exists as a monomer or a dimer and forms supercomplexes (SCs) in the inner mitochondrial membrane with NADH-ubiquinone oxidoreductase (complex I, CI) and ubiquinol-cytochrome c oxidoreductase (cytochrome b-c1 complex, complex III, CIII), resulting in different assemblies (supercomplex SCI(1)III(2)IV(1) and megacomplex MCI(2)III(2)IV(2)) (By similarity). Found in a complex with TMEM177, COA6, COX18, COX20, SCO1 and SCO2. Interacts with TMEM177 in a COX20-dependent manner. Interacts with COX20. Interacts with COX16 (By similarity).</text>
</comment>
<comment type="subcellular location">
    <subcellularLocation>
        <location evidence="3">Mitochondrion inner membrane</location>
        <topology evidence="3">Multi-pass membrane protein</topology>
    </subcellularLocation>
</comment>
<comment type="similarity">
    <text evidence="4">Belongs to the cytochrome c oxidase subunit 2 family.</text>
</comment>
<keyword id="KW-0186">Copper</keyword>
<keyword id="KW-0249">Electron transport</keyword>
<keyword id="KW-0460">Magnesium</keyword>
<keyword id="KW-0472">Membrane</keyword>
<keyword id="KW-0479">Metal-binding</keyword>
<keyword id="KW-0496">Mitochondrion</keyword>
<keyword id="KW-0999">Mitochondrion inner membrane</keyword>
<keyword id="KW-0679">Respiratory chain</keyword>
<keyword id="KW-1278">Translocase</keyword>
<keyword id="KW-0812">Transmembrane</keyword>
<keyword id="KW-1133">Transmembrane helix</keyword>
<keyword id="KW-0813">Transport</keyword>
<accession>P98043</accession>
<proteinExistence type="inferred from homology"/>
<reference key="1">
    <citation type="journal article" date="1994" name="J. Mol. Evol.">
        <title>Evolution of the primate cytochrome c oxidase subunit II gene.</title>
        <authorList>
            <person name="Adkins R.M."/>
            <person name="Honeycutt R.L."/>
        </authorList>
    </citation>
    <scope>NUCLEOTIDE SEQUENCE [GENOMIC DNA]</scope>
</reference>
<sequence>MAHSFQLGFQDATSPIMEELLHFHDHTLMIVFLISSLVLYIITLMLTTKLTHTSTMDAQEVETVWTILPAIILILIALPSLRILYLMDEINTPSLTVKTMGHQWYWSYEYTDYEDLNFDSYMIPTADLKPGELRLLEVDNRVVLPMELPIRMLISSEDVLHSWAVPSLGLKTDAIPGRLNQATLMSTRPGLYYGQCSEICGSNHSFMPIVLELVPLKHFENWSTSMI</sequence>
<organism>
    <name type="scientific">Cephalopachus bancanus</name>
    <name type="common">Western tarsier</name>
    <name type="synonym">Tarsius bancanus</name>
    <dbReference type="NCBI Taxonomy" id="9477"/>
    <lineage>
        <taxon>Eukaryota</taxon>
        <taxon>Metazoa</taxon>
        <taxon>Chordata</taxon>
        <taxon>Craniata</taxon>
        <taxon>Vertebrata</taxon>
        <taxon>Euteleostomi</taxon>
        <taxon>Mammalia</taxon>
        <taxon>Eutheria</taxon>
        <taxon>Euarchontoglires</taxon>
        <taxon>Primates</taxon>
        <taxon>Haplorrhini</taxon>
        <taxon>Tarsiiformes</taxon>
        <taxon>Tarsiidae</taxon>
        <taxon>Cephalopachus</taxon>
    </lineage>
</organism>
<dbReference type="EC" id="7.1.1.9"/>
<dbReference type="EMBL" id="L22783">
    <property type="protein sequence ID" value="AAA20570.1"/>
    <property type="molecule type" value="Genomic_DNA"/>
</dbReference>
<dbReference type="PIR" id="I61844">
    <property type="entry name" value="I61844"/>
</dbReference>
<dbReference type="RefSeq" id="NP_148741.1">
    <property type="nucleotide sequence ID" value="NC_002811.1"/>
</dbReference>
<dbReference type="SMR" id="P98043"/>
<dbReference type="GeneID" id="803399"/>
<dbReference type="CTD" id="4513"/>
<dbReference type="GO" id="GO:0005743">
    <property type="term" value="C:mitochondrial inner membrane"/>
    <property type="evidence" value="ECO:0007669"/>
    <property type="project" value="UniProtKB-SubCell"/>
</dbReference>
<dbReference type="GO" id="GO:0045277">
    <property type="term" value="C:respiratory chain complex IV"/>
    <property type="evidence" value="ECO:0000250"/>
    <property type="project" value="UniProtKB"/>
</dbReference>
<dbReference type="GO" id="GO:0005507">
    <property type="term" value="F:copper ion binding"/>
    <property type="evidence" value="ECO:0007669"/>
    <property type="project" value="InterPro"/>
</dbReference>
<dbReference type="GO" id="GO:0004129">
    <property type="term" value="F:cytochrome-c oxidase activity"/>
    <property type="evidence" value="ECO:0007669"/>
    <property type="project" value="UniProtKB-EC"/>
</dbReference>
<dbReference type="GO" id="GO:0042773">
    <property type="term" value="P:ATP synthesis coupled electron transport"/>
    <property type="evidence" value="ECO:0007669"/>
    <property type="project" value="TreeGrafter"/>
</dbReference>
<dbReference type="CDD" id="cd13912">
    <property type="entry name" value="CcO_II_C"/>
    <property type="match status" value="1"/>
</dbReference>
<dbReference type="FunFam" id="1.10.287.90:FF:000001">
    <property type="entry name" value="Cytochrome c oxidase subunit 2"/>
    <property type="match status" value="1"/>
</dbReference>
<dbReference type="FunFam" id="2.60.40.420:FF:000001">
    <property type="entry name" value="Cytochrome c oxidase subunit 2"/>
    <property type="match status" value="1"/>
</dbReference>
<dbReference type="Gene3D" id="1.10.287.90">
    <property type="match status" value="1"/>
</dbReference>
<dbReference type="Gene3D" id="2.60.40.420">
    <property type="entry name" value="Cupredoxins - blue copper proteins"/>
    <property type="match status" value="1"/>
</dbReference>
<dbReference type="InterPro" id="IPR045187">
    <property type="entry name" value="CcO_II"/>
</dbReference>
<dbReference type="InterPro" id="IPR002429">
    <property type="entry name" value="CcO_II-like_C"/>
</dbReference>
<dbReference type="InterPro" id="IPR034210">
    <property type="entry name" value="CcO_II_C"/>
</dbReference>
<dbReference type="InterPro" id="IPR001505">
    <property type="entry name" value="Copper_CuA"/>
</dbReference>
<dbReference type="InterPro" id="IPR008972">
    <property type="entry name" value="Cupredoxin"/>
</dbReference>
<dbReference type="InterPro" id="IPR014222">
    <property type="entry name" value="Cyt_c_oxidase_su2"/>
</dbReference>
<dbReference type="InterPro" id="IPR011759">
    <property type="entry name" value="Cyt_c_oxidase_su2_TM_dom"/>
</dbReference>
<dbReference type="InterPro" id="IPR036257">
    <property type="entry name" value="Cyt_c_oxidase_su2_TM_sf"/>
</dbReference>
<dbReference type="NCBIfam" id="TIGR02866">
    <property type="entry name" value="CoxB"/>
    <property type="match status" value="1"/>
</dbReference>
<dbReference type="PANTHER" id="PTHR22888:SF9">
    <property type="entry name" value="CYTOCHROME C OXIDASE SUBUNIT 2"/>
    <property type="match status" value="1"/>
</dbReference>
<dbReference type="PANTHER" id="PTHR22888">
    <property type="entry name" value="CYTOCHROME C OXIDASE, SUBUNIT II"/>
    <property type="match status" value="1"/>
</dbReference>
<dbReference type="Pfam" id="PF00116">
    <property type="entry name" value="COX2"/>
    <property type="match status" value="1"/>
</dbReference>
<dbReference type="Pfam" id="PF02790">
    <property type="entry name" value="COX2_TM"/>
    <property type="match status" value="1"/>
</dbReference>
<dbReference type="PRINTS" id="PR01166">
    <property type="entry name" value="CYCOXIDASEII"/>
</dbReference>
<dbReference type="SUPFAM" id="SSF49503">
    <property type="entry name" value="Cupredoxins"/>
    <property type="match status" value="1"/>
</dbReference>
<dbReference type="SUPFAM" id="SSF81464">
    <property type="entry name" value="Cytochrome c oxidase subunit II-like, transmembrane region"/>
    <property type="match status" value="1"/>
</dbReference>
<dbReference type="PROSITE" id="PS00078">
    <property type="entry name" value="COX2"/>
    <property type="match status" value="1"/>
</dbReference>
<dbReference type="PROSITE" id="PS50857">
    <property type="entry name" value="COX2_CUA"/>
    <property type="match status" value="1"/>
</dbReference>
<dbReference type="PROSITE" id="PS50999">
    <property type="entry name" value="COX2_TM"/>
    <property type="match status" value="1"/>
</dbReference>